<sequence length="451" mass="49868">MQNLYIKTYGCQMNEYDSERMADTLAVSHGLRLVDDPVLADVLLLNTCSIREKAEDKVFTQLGFWRPFKERRPEVVIGVGGCVASQEGERLRRRAPYVDLVFGPQTLHRLPDLLDACLAERRPQVDIAFPMLEKFDHLPQRPGRDGATAFVTIQEGCDKFCTFCVVPHTRGREYSRSMPDILREVRALVEQGVREITLLGQNVNAYRGATGLVGEGGLADLLERLARIPGLLRLRYTTSHPANLDDELIAAHGSIGILAPHLHLPVQSGSDRILRRMHRKHTVGQYLDKVDRLRAARPGIQISSDFIVGFPGETDADFAATMELIDAVRFDQSFSFKYSQRPNTPALKLKDSVPEAVKEDRLAVLQGRINGLAQGYAQALVGTQQAVLITGPSRRDAQELTGKTACNRAVNLAGSMDWVGQMLDVEITAALPNSLRGRAALVAPTSQRLAV</sequence>
<reference key="1">
    <citation type="journal article" date="2008" name="BMC Genomics">
        <title>Acidithiobacillus ferrooxidans metabolism: from genome sequence to industrial applications.</title>
        <authorList>
            <person name="Valdes J."/>
            <person name="Pedroso I."/>
            <person name="Quatrini R."/>
            <person name="Dodson R.J."/>
            <person name="Tettelin H."/>
            <person name="Blake R. II"/>
            <person name="Eisen J.A."/>
            <person name="Holmes D.S."/>
        </authorList>
    </citation>
    <scope>NUCLEOTIDE SEQUENCE [LARGE SCALE GENOMIC DNA]</scope>
    <source>
        <strain>ATCC 23270 / DSM 14882 / CIP 104768 / NCIMB 8455</strain>
    </source>
</reference>
<gene>
    <name evidence="1" type="primary">miaB</name>
    <name type="ordered locus">AFE_0596</name>
</gene>
<organism>
    <name type="scientific">Acidithiobacillus ferrooxidans (strain ATCC 23270 / DSM 14882 / CIP 104768 / NCIMB 8455)</name>
    <name type="common">Ferrobacillus ferrooxidans (strain ATCC 23270)</name>
    <dbReference type="NCBI Taxonomy" id="243159"/>
    <lineage>
        <taxon>Bacteria</taxon>
        <taxon>Pseudomonadati</taxon>
        <taxon>Pseudomonadota</taxon>
        <taxon>Acidithiobacillia</taxon>
        <taxon>Acidithiobacillales</taxon>
        <taxon>Acidithiobacillaceae</taxon>
        <taxon>Acidithiobacillus</taxon>
    </lineage>
</organism>
<dbReference type="EC" id="2.8.4.3" evidence="1"/>
<dbReference type="EMBL" id="CP001219">
    <property type="protein sequence ID" value="ACK78618.1"/>
    <property type="molecule type" value="Genomic_DNA"/>
</dbReference>
<dbReference type="RefSeq" id="WP_012536225.1">
    <property type="nucleotide sequence ID" value="NC_011761.1"/>
</dbReference>
<dbReference type="SMR" id="B7J5B2"/>
<dbReference type="STRING" id="243159.AFE_0596"/>
<dbReference type="PaxDb" id="243159-AFE_0596"/>
<dbReference type="GeneID" id="65279950"/>
<dbReference type="KEGG" id="afr:AFE_0596"/>
<dbReference type="eggNOG" id="COG0621">
    <property type="taxonomic scope" value="Bacteria"/>
</dbReference>
<dbReference type="HOGENOM" id="CLU_018697_2_2_6"/>
<dbReference type="Proteomes" id="UP000001362">
    <property type="component" value="Chromosome"/>
</dbReference>
<dbReference type="GO" id="GO:0005829">
    <property type="term" value="C:cytosol"/>
    <property type="evidence" value="ECO:0007669"/>
    <property type="project" value="TreeGrafter"/>
</dbReference>
<dbReference type="GO" id="GO:0051539">
    <property type="term" value="F:4 iron, 4 sulfur cluster binding"/>
    <property type="evidence" value="ECO:0007669"/>
    <property type="project" value="UniProtKB-UniRule"/>
</dbReference>
<dbReference type="GO" id="GO:0046872">
    <property type="term" value="F:metal ion binding"/>
    <property type="evidence" value="ECO:0007669"/>
    <property type="project" value="UniProtKB-KW"/>
</dbReference>
<dbReference type="GO" id="GO:0035597">
    <property type="term" value="F:N6-isopentenyladenosine methylthiotransferase activity"/>
    <property type="evidence" value="ECO:0007669"/>
    <property type="project" value="TreeGrafter"/>
</dbReference>
<dbReference type="CDD" id="cd01335">
    <property type="entry name" value="Radical_SAM"/>
    <property type="match status" value="1"/>
</dbReference>
<dbReference type="FunFam" id="3.40.50.12160:FF:000001">
    <property type="entry name" value="tRNA-2-methylthio-N(6)-dimethylallyladenosine synthase"/>
    <property type="match status" value="1"/>
</dbReference>
<dbReference type="FunFam" id="3.80.30.20:FF:000001">
    <property type="entry name" value="tRNA-2-methylthio-N(6)-dimethylallyladenosine synthase 2"/>
    <property type="match status" value="1"/>
</dbReference>
<dbReference type="Gene3D" id="3.40.50.12160">
    <property type="entry name" value="Methylthiotransferase, N-terminal domain"/>
    <property type="match status" value="1"/>
</dbReference>
<dbReference type="Gene3D" id="3.80.30.20">
    <property type="entry name" value="tm_1862 like domain"/>
    <property type="match status" value="1"/>
</dbReference>
<dbReference type="HAMAP" id="MF_01864">
    <property type="entry name" value="tRNA_metthiotr_MiaB"/>
    <property type="match status" value="1"/>
</dbReference>
<dbReference type="InterPro" id="IPR006638">
    <property type="entry name" value="Elp3/MiaA/NifB-like_rSAM"/>
</dbReference>
<dbReference type="InterPro" id="IPR005839">
    <property type="entry name" value="Methylthiotransferase"/>
</dbReference>
<dbReference type="InterPro" id="IPR020612">
    <property type="entry name" value="Methylthiotransferase_CS"/>
</dbReference>
<dbReference type="InterPro" id="IPR013848">
    <property type="entry name" value="Methylthiotransferase_N"/>
</dbReference>
<dbReference type="InterPro" id="IPR038135">
    <property type="entry name" value="Methylthiotransferase_N_sf"/>
</dbReference>
<dbReference type="InterPro" id="IPR006463">
    <property type="entry name" value="MiaB_methiolase"/>
</dbReference>
<dbReference type="InterPro" id="IPR007197">
    <property type="entry name" value="rSAM"/>
</dbReference>
<dbReference type="InterPro" id="IPR023404">
    <property type="entry name" value="rSAM_horseshoe"/>
</dbReference>
<dbReference type="InterPro" id="IPR002792">
    <property type="entry name" value="TRAM_dom"/>
</dbReference>
<dbReference type="NCBIfam" id="TIGR01574">
    <property type="entry name" value="miaB-methiolase"/>
    <property type="match status" value="1"/>
</dbReference>
<dbReference type="NCBIfam" id="TIGR00089">
    <property type="entry name" value="MiaB/RimO family radical SAM methylthiotransferase"/>
    <property type="match status" value="1"/>
</dbReference>
<dbReference type="PANTHER" id="PTHR43020">
    <property type="entry name" value="CDK5 REGULATORY SUBUNIT-ASSOCIATED PROTEIN 1"/>
    <property type="match status" value="1"/>
</dbReference>
<dbReference type="PANTHER" id="PTHR43020:SF2">
    <property type="entry name" value="MITOCHONDRIAL TRNA METHYLTHIOTRANSFERASE CDK5RAP1"/>
    <property type="match status" value="1"/>
</dbReference>
<dbReference type="Pfam" id="PF04055">
    <property type="entry name" value="Radical_SAM"/>
    <property type="match status" value="1"/>
</dbReference>
<dbReference type="Pfam" id="PF01938">
    <property type="entry name" value="TRAM"/>
    <property type="match status" value="1"/>
</dbReference>
<dbReference type="Pfam" id="PF00919">
    <property type="entry name" value="UPF0004"/>
    <property type="match status" value="1"/>
</dbReference>
<dbReference type="SFLD" id="SFLDF00273">
    <property type="entry name" value="(dimethylallyl)adenosine_tRNA"/>
    <property type="match status" value="1"/>
</dbReference>
<dbReference type="SFLD" id="SFLDG01082">
    <property type="entry name" value="B12-binding_domain_containing"/>
    <property type="match status" value="1"/>
</dbReference>
<dbReference type="SFLD" id="SFLDS00029">
    <property type="entry name" value="Radical_SAM"/>
    <property type="match status" value="1"/>
</dbReference>
<dbReference type="SMART" id="SM00729">
    <property type="entry name" value="Elp3"/>
    <property type="match status" value="1"/>
</dbReference>
<dbReference type="SUPFAM" id="SSF102114">
    <property type="entry name" value="Radical SAM enzymes"/>
    <property type="match status" value="1"/>
</dbReference>
<dbReference type="PROSITE" id="PS51449">
    <property type="entry name" value="MTTASE_N"/>
    <property type="match status" value="1"/>
</dbReference>
<dbReference type="PROSITE" id="PS01278">
    <property type="entry name" value="MTTASE_RADICAL"/>
    <property type="match status" value="1"/>
</dbReference>
<dbReference type="PROSITE" id="PS51918">
    <property type="entry name" value="RADICAL_SAM"/>
    <property type="match status" value="1"/>
</dbReference>
<dbReference type="PROSITE" id="PS50926">
    <property type="entry name" value="TRAM"/>
    <property type="match status" value="1"/>
</dbReference>
<name>MIAB_ACIF2</name>
<protein>
    <recommendedName>
        <fullName evidence="1">tRNA-2-methylthio-N(6)-dimethylallyladenosine synthase</fullName>
        <ecNumber evidence="1">2.8.4.3</ecNumber>
    </recommendedName>
    <alternativeName>
        <fullName evidence="1">(Dimethylallyl)adenosine tRNA methylthiotransferase MiaB</fullName>
    </alternativeName>
    <alternativeName>
        <fullName evidence="1">tRNA-i(6)A37 methylthiotransferase</fullName>
    </alternativeName>
</protein>
<proteinExistence type="inferred from homology"/>
<evidence type="ECO:0000255" key="1">
    <source>
        <dbReference type="HAMAP-Rule" id="MF_01864"/>
    </source>
</evidence>
<evidence type="ECO:0000255" key="2">
    <source>
        <dbReference type="PROSITE-ProRule" id="PRU01266"/>
    </source>
</evidence>
<accession>B7J5B2</accession>
<keyword id="KW-0004">4Fe-4S</keyword>
<keyword id="KW-0963">Cytoplasm</keyword>
<keyword id="KW-0408">Iron</keyword>
<keyword id="KW-0411">Iron-sulfur</keyword>
<keyword id="KW-0479">Metal-binding</keyword>
<keyword id="KW-1185">Reference proteome</keyword>
<keyword id="KW-0949">S-adenosyl-L-methionine</keyword>
<keyword id="KW-0808">Transferase</keyword>
<keyword id="KW-0819">tRNA processing</keyword>
<feature type="chain" id="PRO_0000374081" description="tRNA-2-methylthio-N(6)-dimethylallyladenosine synthase">
    <location>
        <begin position="1"/>
        <end position="451"/>
    </location>
</feature>
<feature type="domain" description="MTTase N-terminal" evidence="1">
    <location>
        <begin position="2"/>
        <end position="119"/>
    </location>
</feature>
<feature type="domain" description="Radical SAM core" evidence="2">
    <location>
        <begin position="143"/>
        <end position="377"/>
    </location>
</feature>
<feature type="domain" description="TRAM" evidence="1">
    <location>
        <begin position="378"/>
        <end position="441"/>
    </location>
</feature>
<feature type="binding site" evidence="1">
    <location>
        <position position="11"/>
    </location>
    <ligand>
        <name>[4Fe-4S] cluster</name>
        <dbReference type="ChEBI" id="CHEBI:49883"/>
        <label>1</label>
    </ligand>
</feature>
<feature type="binding site" evidence="1">
    <location>
        <position position="48"/>
    </location>
    <ligand>
        <name>[4Fe-4S] cluster</name>
        <dbReference type="ChEBI" id="CHEBI:49883"/>
        <label>1</label>
    </ligand>
</feature>
<feature type="binding site" evidence="1">
    <location>
        <position position="82"/>
    </location>
    <ligand>
        <name>[4Fe-4S] cluster</name>
        <dbReference type="ChEBI" id="CHEBI:49883"/>
        <label>1</label>
    </ligand>
</feature>
<feature type="binding site" evidence="1">
    <location>
        <position position="157"/>
    </location>
    <ligand>
        <name>[4Fe-4S] cluster</name>
        <dbReference type="ChEBI" id="CHEBI:49883"/>
        <label>2</label>
        <note>4Fe-4S-S-AdoMet</note>
    </ligand>
</feature>
<feature type="binding site" evidence="1">
    <location>
        <position position="161"/>
    </location>
    <ligand>
        <name>[4Fe-4S] cluster</name>
        <dbReference type="ChEBI" id="CHEBI:49883"/>
        <label>2</label>
        <note>4Fe-4S-S-AdoMet</note>
    </ligand>
</feature>
<feature type="binding site" evidence="1">
    <location>
        <position position="164"/>
    </location>
    <ligand>
        <name>[4Fe-4S] cluster</name>
        <dbReference type="ChEBI" id="CHEBI:49883"/>
        <label>2</label>
        <note>4Fe-4S-S-AdoMet</note>
    </ligand>
</feature>
<comment type="function">
    <text evidence="1">Catalyzes the methylthiolation of N6-(dimethylallyl)adenosine (i(6)A), leading to the formation of 2-methylthio-N6-(dimethylallyl)adenosine (ms(2)i(6)A) at position 37 in tRNAs that read codons beginning with uridine.</text>
</comment>
<comment type="catalytic activity">
    <reaction evidence="1">
        <text>N(6)-dimethylallyladenosine(37) in tRNA + (sulfur carrier)-SH + AH2 + 2 S-adenosyl-L-methionine = 2-methylsulfanyl-N(6)-dimethylallyladenosine(37) in tRNA + (sulfur carrier)-H + 5'-deoxyadenosine + L-methionine + A + S-adenosyl-L-homocysteine + 2 H(+)</text>
        <dbReference type="Rhea" id="RHEA:37067"/>
        <dbReference type="Rhea" id="RHEA-COMP:10375"/>
        <dbReference type="Rhea" id="RHEA-COMP:10376"/>
        <dbReference type="Rhea" id="RHEA-COMP:14737"/>
        <dbReference type="Rhea" id="RHEA-COMP:14739"/>
        <dbReference type="ChEBI" id="CHEBI:13193"/>
        <dbReference type="ChEBI" id="CHEBI:15378"/>
        <dbReference type="ChEBI" id="CHEBI:17319"/>
        <dbReference type="ChEBI" id="CHEBI:17499"/>
        <dbReference type="ChEBI" id="CHEBI:29917"/>
        <dbReference type="ChEBI" id="CHEBI:57844"/>
        <dbReference type="ChEBI" id="CHEBI:57856"/>
        <dbReference type="ChEBI" id="CHEBI:59789"/>
        <dbReference type="ChEBI" id="CHEBI:64428"/>
        <dbReference type="ChEBI" id="CHEBI:74415"/>
        <dbReference type="ChEBI" id="CHEBI:74417"/>
        <dbReference type="EC" id="2.8.4.3"/>
    </reaction>
</comment>
<comment type="cofactor">
    <cofactor evidence="1">
        <name>[4Fe-4S] cluster</name>
        <dbReference type="ChEBI" id="CHEBI:49883"/>
    </cofactor>
    <text evidence="1">Binds 2 [4Fe-4S] clusters. One cluster is coordinated with 3 cysteines and an exchangeable S-adenosyl-L-methionine.</text>
</comment>
<comment type="subunit">
    <text evidence="1">Monomer.</text>
</comment>
<comment type="subcellular location">
    <subcellularLocation>
        <location evidence="1">Cytoplasm</location>
    </subcellularLocation>
</comment>
<comment type="similarity">
    <text evidence="1">Belongs to the methylthiotransferase family. MiaB subfamily.</text>
</comment>